<protein>
    <recommendedName>
        <fullName evidence="9">Sodium-potassium/proton antiporter ChaA</fullName>
    </recommendedName>
    <alternativeName>
        <fullName>Na(+)/H(+) exchanger</fullName>
    </alternativeName>
</protein>
<accession>P31801</accession>
<keyword id="KW-0050">Antiport</keyword>
<keyword id="KW-0106">Calcium</keyword>
<keyword id="KW-0997">Cell inner membrane</keyword>
<keyword id="KW-1003">Cell membrane</keyword>
<keyword id="KW-0406">Ion transport</keyword>
<keyword id="KW-0472">Membrane</keyword>
<keyword id="KW-0630">Potassium</keyword>
<keyword id="KW-1185">Reference proteome</keyword>
<keyword id="KW-0915">Sodium</keyword>
<keyword id="KW-0812">Transmembrane</keyword>
<keyword id="KW-1133">Transmembrane helix</keyword>
<keyword id="KW-0813">Transport</keyword>
<organism>
    <name type="scientific">Escherichia coli (strain K12)</name>
    <dbReference type="NCBI Taxonomy" id="83333"/>
    <lineage>
        <taxon>Bacteria</taxon>
        <taxon>Pseudomonadati</taxon>
        <taxon>Pseudomonadota</taxon>
        <taxon>Gammaproteobacteria</taxon>
        <taxon>Enterobacterales</taxon>
        <taxon>Enterobacteriaceae</taxon>
        <taxon>Escherichia</taxon>
    </lineage>
</organism>
<reference key="1">
    <citation type="journal article" date="1993" name="J. Biol. Chem.">
        <title>Cloning and characterization of a putative Ca2+/H+ antiporter gene from Escherichia coli upon functional complementation of Na+/H+ antiporter-deficient strains by the overexpressed gene.</title>
        <authorList>
            <person name="Ivey D.M."/>
            <person name="Guffanti A.A."/>
            <person name="Zemsky J."/>
            <person name="Pinner E."/>
            <person name="Karpel R."/>
            <person name="Padan E."/>
            <person name="Schuldiner S."/>
            <person name="Krulwich T.A."/>
        </authorList>
    </citation>
    <scope>NUCLEOTIDE SEQUENCE [GENOMIC DNA]</scope>
    <scope>FUNCTION IN SODIUM AND CALCIUM EXPORT</scope>
    <scope>CATALYTIC ACTIVITY</scope>
    <scope>ACTIVITY REGULATION</scope>
    <source>
        <strain>NM8191</strain>
    </source>
</reference>
<reference key="2">
    <citation type="journal article" date="1996" name="DNA Res.">
        <title>A 718-kb DNA sequence of the Escherichia coli K-12 genome corresponding to the 12.7-28.0 min region on the linkage map.</title>
        <authorList>
            <person name="Oshima T."/>
            <person name="Aiba H."/>
            <person name="Baba T."/>
            <person name="Fujita K."/>
            <person name="Hayashi K."/>
            <person name="Honjo A."/>
            <person name="Ikemoto K."/>
            <person name="Inada T."/>
            <person name="Itoh T."/>
            <person name="Kajihara M."/>
            <person name="Kanai K."/>
            <person name="Kashimoto K."/>
            <person name="Kimura S."/>
            <person name="Kitagawa M."/>
            <person name="Makino K."/>
            <person name="Masuda S."/>
            <person name="Miki T."/>
            <person name="Mizobuchi K."/>
            <person name="Mori H."/>
            <person name="Motomura K."/>
            <person name="Nakamura Y."/>
            <person name="Nashimoto H."/>
            <person name="Nishio Y."/>
            <person name="Saito N."/>
            <person name="Sampei G."/>
            <person name="Seki Y."/>
            <person name="Tagami H."/>
            <person name="Takemoto K."/>
            <person name="Wada C."/>
            <person name="Yamamoto Y."/>
            <person name="Yano M."/>
            <person name="Horiuchi T."/>
        </authorList>
    </citation>
    <scope>NUCLEOTIDE SEQUENCE [LARGE SCALE GENOMIC DNA]</scope>
    <source>
        <strain>K12 / W3110 / ATCC 27325 / DSM 5911</strain>
    </source>
</reference>
<reference key="3">
    <citation type="journal article" date="1997" name="Science">
        <title>The complete genome sequence of Escherichia coli K-12.</title>
        <authorList>
            <person name="Blattner F.R."/>
            <person name="Plunkett G. III"/>
            <person name="Bloch C.A."/>
            <person name="Perna N.T."/>
            <person name="Burland V."/>
            <person name="Riley M."/>
            <person name="Collado-Vides J."/>
            <person name="Glasner J.D."/>
            <person name="Rode C.K."/>
            <person name="Mayhew G.F."/>
            <person name="Gregor J."/>
            <person name="Davis N.W."/>
            <person name="Kirkpatrick H.A."/>
            <person name="Goeden M.A."/>
            <person name="Rose D.J."/>
            <person name="Mau B."/>
            <person name="Shao Y."/>
        </authorList>
    </citation>
    <scope>NUCLEOTIDE SEQUENCE [LARGE SCALE GENOMIC DNA]</scope>
    <source>
        <strain>K12 / MG1655 / ATCC 47076</strain>
    </source>
</reference>
<reference key="4">
    <citation type="journal article" date="2006" name="Mol. Syst. Biol.">
        <title>Highly accurate genome sequences of Escherichia coli K-12 strains MG1655 and W3110.</title>
        <authorList>
            <person name="Hayashi K."/>
            <person name="Morooka N."/>
            <person name="Yamamoto Y."/>
            <person name="Fujita K."/>
            <person name="Isono K."/>
            <person name="Choi S."/>
            <person name="Ohtsubo E."/>
            <person name="Baba T."/>
            <person name="Wanner B.L."/>
            <person name="Mori H."/>
            <person name="Horiuchi T."/>
        </authorList>
    </citation>
    <scope>NUCLEOTIDE SEQUENCE [LARGE SCALE GENOMIC DNA]</scope>
    <source>
        <strain>K12 / W3110 / ATCC 27325 / DSM 5911</strain>
    </source>
</reference>
<reference key="5">
    <citation type="journal article" date="1994" name="J. Bacteriol.">
        <title>Physiological role of the chaA gene in sodium and calcium circulations at a high pH in Escherichia coli.</title>
        <authorList>
            <person name="Ohyama T."/>
            <person name="Igarashi K."/>
            <person name="Kobayashi H."/>
        </authorList>
    </citation>
    <scope>FUNCTION IN SODIUM AND CALCIUM EXPORT</scope>
    <source>
        <strain>K12 / W3110 / ATCC 27325 / DSM 5911</strain>
    </source>
</reference>
<reference key="6">
    <citation type="journal article" date="1998" name="Biochim. Biophys. Acta">
        <title>pH dependence of the function of sodium ion extrusion systems in Escherichia coli.</title>
        <authorList>
            <person name="Sakuma T."/>
            <person name="Yamada N."/>
            <person name="Saito H."/>
            <person name="Kakegawa T."/>
            <person name="Kobayashi H."/>
        </authorList>
    </citation>
    <scope>FUNCTION IN SODIUM EXPORT</scope>
    <source>
        <strain>K12 / W3110 / ATCC 27325 / DSM 5911</strain>
    </source>
</reference>
<reference key="7">
    <citation type="journal article" date="2005" name="Science">
        <title>Global topology analysis of the Escherichia coli inner membrane proteome.</title>
        <authorList>
            <person name="Daley D.O."/>
            <person name="Rapp M."/>
            <person name="Granseth E."/>
            <person name="Melen K."/>
            <person name="Drew D."/>
            <person name="von Heijne G."/>
        </authorList>
    </citation>
    <scope>TOPOLOGY [LARGE SCALE ANALYSIS]</scope>
    <scope>SUBCELLULAR LOCATION</scope>
    <source>
        <strain>K12 / MG1655 / ATCC 47076</strain>
    </source>
</reference>
<reference key="8">
    <citation type="journal article" date="2006" name="J. Biol. Chem.">
        <title>Potassium/proton antiport system of Escherichia coli.</title>
        <authorList>
            <person name="Radchenko M.V."/>
            <person name="Tanaka K."/>
            <person name="Waditee R."/>
            <person name="Oshimi S."/>
            <person name="Matsuzaki Y."/>
            <person name="Fukuhara M."/>
            <person name="Kobayashi H."/>
            <person name="Takabe T."/>
            <person name="Nakamura T."/>
        </authorList>
    </citation>
    <scope>FUNCTION IN POTASSIUM EXPORT</scope>
    <scope>CATALYTIC ACTIVITY</scope>
    <source>
        <strain>K12 / W3110 / ATCC 27325 / DSM 5911</strain>
    </source>
</reference>
<reference key="9">
    <citation type="journal article" date="2008" name="Biochim. Biophys. Acta">
        <title>pH and monovalent cations regulate cytosolic free Ca(2+) in E. coli.</title>
        <authorList>
            <person name="Naseem R."/>
            <person name="Holland I.B."/>
            <person name="Jacq A."/>
            <person name="Wann K.T."/>
            <person name="Campbell A.K."/>
        </authorList>
    </citation>
    <scope>FUNCTION IN CALCIUM EXPORT</scope>
    <source>
        <strain>K12</strain>
    </source>
</reference>
<evidence type="ECO:0000255" key="1"/>
<evidence type="ECO:0000269" key="2">
    <source>
    </source>
</evidence>
<evidence type="ECO:0000269" key="3">
    <source>
    </source>
</evidence>
<evidence type="ECO:0000269" key="4">
    <source>
    </source>
</evidence>
<evidence type="ECO:0000269" key="5">
    <source>
    </source>
</evidence>
<evidence type="ECO:0000269" key="6">
    <source>
    </source>
</evidence>
<evidence type="ECO:0000269" key="7">
    <source>
    </source>
</evidence>
<evidence type="ECO:0000303" key="8">
    <source>
    </source>
</evidence>
<evidence type="ECO:0000305" key="9"/>
<feature type="chain" id="PRO_0000209506" description="Sodium-potassium/proton antiporter ChaA">
    <location>
        <begin position="1"/>
        <end position="366"/>
    </location>
</feature>
<feature type="topological domain" description="Cytoplasmic" evidence="9">
    <location>
        <begin position="1"/>
        <end position="16"/>
    </location>
</feature>
<feature type="transmembrane region" description="Helical" evidence="1">
    <location>
        <begin position="17"/>
        <end position="37"/>
    </location>
</feature>
<feature type="transmembrane region" description="Helical" evidence="1">
    <location>
        <begin position="38"/>
        <end position="58"/>
    </location>
</feature>
<feature type="topological domain" description="Cytoplasmic" evidence="9">
    <location>
        <begin position="59"/>
        <end position="74"/>
    </location>
</feature>
<feature type="transmembrane region" description="Helical" evidence="1">
    <location>
        <begin position="75"/>
        <end position="95"/>
    </location>
</feature>
<feature type="topological domain" description="Periplasmic" evidence="9">
    <location>
        <begin position="96"/>
        <end position="106"/>
    </location>
</feature>
<feature type="transmembrane region" description="Helical" evidence="1">
    <location>
        <begin position="107"/>
        <end position="127"/>
    </location>
</feature>
<feature type="topological domain" description="Cytoplasmic" evidence="9">
    <location>
        <begin position="128"/>
        <end position="143"/>
    </location>
</feature>
<feature type="transmembrane region" description="Helical" evidence="1">
    <location>
        <begin position="144"/>
        <end position="164"/>
    </location>
</feature>
<feature type="topological domain" description="Periplasmic" evidence="9">
    <location>
        <begin position="165"/>
        <end position="167"/>
    </location>
</feature>
<feature type="transmembrane region" description="Helical" evidence="1">
    <location>
        <begin position="168"/>
        <end position="188"/>
    </location>
</feature>
<feature type="topological domain" description="Cytoplasmic" evidence="9">
    <location>
        <begin position="189"/>
        <end position="216"/>
    </location>
</feature>
<feature type="transmembrane region" description="Helical" evidence="1">
    <location>
        <begin position="217"/>
        <end position="237"/>
    </location>
</feature>
<feature type="topological domain" description="Periplasmic" evidence="9">
    <location>
        <begin position="238"/>
        <end position="255"/>
    </location>
</feature>
<feature type="transmembrane region" description="Helical" evidence="1">
    <location>
        <begin position="256"/>
        <end position="276"/>
    </location>
</feature>
<feature type="topological domain" description="Cytoplasmic" evidence="9">
    <location>
        <begin position="277"/>
        <end position="290"/>
    </location>
</feature>
<feature type="transmembrane region" description="Helical" evidence="1">
    <location>
        <begin position="291"/>
        <end position="311"/>
    </location>
</feature>
<feature type="topological domain" description="Periplasmic" evidence="9">
    <location>
        <begin position="312"/>
        <end position="318"/>
    </location>
</feature>
<feature type="transmembrane region" description="Helical" evidence="1">
    <location>
        <begin position="319"/>
        <end position="339"/>
    </location>
</feature>
<feature type="topological domain" description="Cytoplasmic" evidence="9">
    <location>
        <begin position="340"/>
        <end position="345"/>
    </location>
</feature>
<feature type="transmembrane region" description="Helical" evidence="1">
    <location>
        <begin position="346"/>
        <end position="366"/>
    </location>
</feature>
<comment type="function">
    <text evidence="3 4 5 6 7">Sodium exporter that functions mainly at alkaline pH (PubMed:8021217, PubMed:8496184, PubMed:9518629). Can also function as a potassium/proton and calcium/proton antiporter at alkaline pH (PubMed:16687400, PubMed:18342619, PubMed:8021217, PubMed:8496184). Does not play a major role in calcium export (PubMed:18342619). The K(+)/H(+) antiporter activity may enable E.coli to adapt to K(+) salinity stress and to maintain K(+) homeostasis (PubMed:16687400).</text>
</comment>
<comment type="catalytic activity">
    <reaction evidence="6">
        <text>Na(+)(in) + H(+)(out) = Na(+)(out) + H(+)(in)</text>
        <dbReference type="Rhea" id="RHEA:29419"/>
        <dbReference type="ChEBI" id="CHEBI:15378"/>
        <dbReference type="ChEBI" id="CHEBI:29101"/>
    </reaction>
    <physiologicalReaction direction="left-to-right" evidence="6">
        <dbReference type="Rhea" id="RHEA:29420"/>
    </physiologicalReaction>
</comment>
<comment type="catalytic activity">
    <reaction evidence="3">
        <text>K(+)(in) + H(+)(out) = K(+)(out) + H(+)(in)</text>
        <dbReference type="Rhea" id="RHEA:29467"/>
        <dbReference type="ChEBI" id="CHEBI:15378"/>
        <dbReference type="ChEBI" id="CHEBI:29103"/>
    </reaction>
    <physiologicalReaction direction="left-to-right" evidence="3">
        <dbReference type="Rhea" id="RHEA:29468"/>
    </physiologicalReaction>
</comment>
<comment type="catalytic activity">
    <reaction evidence="6">
        <text>Ca(2+)(in) + H(+)(out) = Ca(2+)(out) + H(+)(in)</text>
        <dbReference type="Rhea" id="RHEA:71799"/>
        <dbReference type="ChEBI" id="CHEBI:15378"/>
        <dbReference type="ChEBI" id="CHEBI:29108"/>
    </reaction>
    <physiologicalReaction direction="left-to-right" evidence="6">
        <dbReference type="Rhea" id="RHEA:71800"/>
    </physiologicalReaction>
</comment>
<comment type="activity regulation">
    <text evidence="6">Pronounced pH dependence with sodium as substrate (PubMed:8496184). Ca(2+)/H(+) and Na(+)/H(+) antiporter activities are both inhibited by magnesium (PubMed:8496184). Ca(2+)/H(+) activity is inhibited by the proton ionophore carbonyl cyanide m-chlorophenylhydrazone (CCCP) (PubMed:8496184).</text>
</comment>
<comment type="subcellular location">
    <subcellularLocation>
        <location evidence="2">Cell inner membrane</location>
        <topology evidence="1">Multi-pass membrane protein</topology>
    </subcellularLocation>
</comment>
<comment type="similarity">
    <text evidence="9">Belongs to the Ca(2+):cation antiporter (CaCA) (TC 2.A.19) family.</text>
</comment>
<proteinExistence type="evidence at protein level"/>
<dbReference type="EMBL" id="L28709">
    <property type="protein sequence ID" value="AAA20200.1"/>
    <property type="molecule type" value="Genomic_DNA"/>
</dbReference>
<dbReference type="EMBL" id="U00096">
    <property type="protein sequence ID" value="AAC74300.1"/>
    <property type="molecule type" value="Genomic_DNA"/>
</dbReference>
<dbReference type="EMBL" id="AP009048">
    <property type="protein sequence ID" value="BAA36074.1"/>
    <property type="molecule type" value="Genomic_DNA"/>
</dbReference>
<dbReference type="PIR" id="A46716">
    <property type="entry name" value="A46716"/>
</dbReference>
<dbReference type="RefSeq" id="NP_415734.1">
    <property type="nucleotide sequence ID" value="NC_000913.3"/>
</dbReference>
<dbReference type="RefSeq" id="WP_000063607.1">
    <property type="nucleotide sequence ID" value="NZ_SSZK01000010.1"/>
</dbReference>
<dbReference type="SMR" id="P31801"/>
<dbReference type="BioGRID" id="4260120">
    <property type="interactions" value="11"/>
</dbReference>
<dbReference type="BioGRID" id="850157">
    <property type="interactions" value="2"/>
</dbReference>
<dbReference type="FunCoup" id="P31801">
    <property type="interactions" value="188"/>
</dbReference>
<dbReference type="STRING" id="511145.b1216"/>
<dbReference type="TCDB" id="2.A.19.1.1">
    <property type="family name" value="the ca(2+):cation antiporter (caca) family"/>
</dbReference>
<dbReference type="PaxDb" id="511145-b1216"/>
<dbReference type="EnsemblBacteria" id="AAC74300">
    <property type="protein sequence ID" value="AAC74300"/>
    <property type="gene ID" value="b1216"/>
</dbReference>
<dbReference type="GeneID" id="945790"/>
<dbReference type="KEGG" id="ecj:JW1207"/>
<dbReference type="KEGG" id="eco:b1216"/>
<dbReference type="KEGG" id="ecoc:C3026_07155"/>
<dbReference type="PATRIC" id="fig|1411691.4.peg.1066"/>
<dbReference type="EchoBASE" id="EB1703"/>
<dbReference type="eggNOG" id="COG0387">
    <property type="taxonomic scope" value="Bacteria"/>
</dbReference>
<dbReference type="HOGENOM" id="CLU_050648_0_0_6"/>
<dbReference type="InParanoid" id="P31801"/>
<dbReference type="OMA" id="AVMITCN"/>
<dbReference type="OrthoDB" id="9787814at2"/>
<dbReference type="PhylomeDB" id="P31801"/>
<dbReference type="BioCyc" id="EcoCyc:CHAA-MONOMER"/>
<dbReference type="BioCyc" id="MetaCyc:CHAA-MONOMER"/>
<dbReference type="PRO" id="PR:P31801"/>
<dbReference type="Proteomes" id="UP000000625">
    <property type="component" value="Chromosome"/>
</dbReference>
<dbReference type="GO" id="GO:0005886">
    <property type="term" value="C:plasma membrane"/>
    <property type="evidence" value="ECO:0000314"/>
    <property type="project" value="EcoCyc"/>
</dbReference>
<dbReference type="GO" id="GO:0015386">
    <property type="term" value="F:potassium:proton antiporter activity"/>
    <property type="evidence" value="ECO:0000314"/>
    <property type="project" value="EcoCyc"/>
</dbReference>
<dbReference type="GO" id="GO:0015385">
    <property type="term" value="F:sodium:proton antiporter activity"/>
    <property type="evidence" value="ECO:0000314"/>
    <property type="project" value="EcoCyc"/>
</dbReference>
<dbReference type="GO" id="GO:0010446">
    <property type="term" value="P:response to alkaline pH"/>
    <property type="evidence" value="ECO:0000314"/>
    <property type="project" value="EcoCyc"/>
</dbReference>
<dbReference type="InterPro" id="IPR052946">
    <property type="entry name" value="Alkaline_pH_Ca-Antiporter"/>
</dbReference>
<dbReference type="InterPro" id="IPR004837">
    <property type="entry name" value="NaCa_Exmemb"/>
</dbReference>
<dbReference type="NCBIfam" id="TIGR00846">
    <property type="entry name" value="caca2"/>
    <property type="match status" value="1"/>
</dbReference>
<dbReference type="NCBIfam" id="NF007895">
    <property type="entry name" value="PRK10599.1"/>
    <property type="match status" value="1"/>
</dbReference>
<dbReference type="PANTHER" id="PTHR37958">
    <property type="entry name" value="SODIUM-POTASSIUM/PROTON ANTIPORTER CHAA"/>
    <property type="match status" value="1"/>
</dbReference>
<dbReference type="PANTHER" id="PTHR37958:SF1">
    <property type="entry name" value="SODIUM-POTASSIUM_PROTON ANTIPORTER CHAA"/>
    <property type="match status" value="1"/>
</dbReference>
<dbReference type="Pfam" id="PF01699">
    <property type="entry name" value="Na_Ca_ex"/>
    <property type="match status" value="2"/>
</dbReference>
<gene>
    <name evidence="8" type="primary">chaA</name>
    <name type="ordered locus">b1216</name>
    <name type="ordered locus">JW1207</name>
</gene>
<sequence length="366" mass="39168">MSNAQEAVKTRHKETSLIFPVLALVVLFLWGSSQTLPVVIAINLLALIGILSSAFSVVRHADVLAHRLGEPYGSLILSLSVVILEVSLISALMATGDAAPTLMRDTLYSIIMIVTGGLVGFSLLLGGRKFATQYMNLFGIKQYLIALFPLAIIVLVFPMALPAANFSTGQALLVALISAAMYGVFLLIQTKTHQSLFVYEHEDDSDDDDPHHGKPSAHSSLWHAIWLIIHLIAVIAVTKMNASSLETLLDSMNAPVAFTGFLVALLILSPEGLGALKAVLNNQVQRAMNLFFGSVLATISLTVPVVTLIAFMTGNELQFALGAPEMVVMVASLVLCHISFSTGRTNVLNGAAHLALFAAYLMTIFA</sequence>
<name>CHAA_ECOLI</name>